<feature type="chain" id="PRO_1000017152" description="tRNA pseudouridine synthase A">
    <location>
        <begin position="1"/>
        <end position="278"/>
    </location>
</feature>
<feature type="region of interest" description="Disordered" evidence="2">
    <location>
        <begin position="253"/>
        <end position="278"/>
    </location>
</feature>
<feature type="compositionally biased region" description="Low complexity" evidence="2">
    <location>
        <begin position="253"/>
        <end position="264"/>
    </location>
</feature>
<feature type="compositionally biased region" description="Basic and acidic residues" evidence="2">
    <location>
        <begin position="267"/>
        <end position="278"/>
    </location>
</feature>
<feature type="active site" description="Nucleophile" evidence="1">
    <location>
        <position position="52"/>
    </location>
</feature>
<feature type="binding site" evidence="1">
    <location>
        <position position="111"/>
    </location>
    <ligand>
        <name>substrate</name>
    </ligand>
</feature>
<name>TRUA_RHORT</name>
<dbReference type="EC" id="5.4.99.12" evidence="1"/>
<dbReference type="EMBL" id="CP000230">
    <property type="protein sequence ID" value="ABC24146.1"/>
    <property type="molecule type" value="Genomic_DNA"/>
</dbReference>
<dbReference type="RefSeq" id="WP_011391099.1">
    <property type="nucleotide sequence ID" value="NC_007643.1"/>
</dbReference>
<dbReference type="RefSeq" id="YP_428433.1">
    <property type="nucleotide sequence ID" value="NC_007643.1"/>
</dbReference>
<dbReference type="SMR" id="Q2RNZ9"/>
<dbReference type="STRING" id="269796.Rru_A3352"/>
<dbReference type="EnsemblBacteria" id="ABC24146">
    <property type="protein sequence ID" value="ABC24146"/>
    <property type="gene ID" value="Rru_A3352"/>
</dbReference>
<dbReference type="KEGG" id="rru:Rru_A3352"/>
<dbReference type="PATRIC" id="fig|269796.9.peg.3466"/>
<dbReference type="eggNOG" id="COG0101">
    <property type="taxonomic scope" value="Bacteria"/>
</dbReference>
<dbReference type="HOGENOM" id="CLU_014673_0_1_5"/>
<dbReference type="PhylomeDB" id="Q2RNZ9"/>
<dbReference type="Proteomes" id="UP000001929">
    <property type="component" value="Chromosome"/>
</dbReference>
<dbReference type="GO" id="GO:0003723">
    <property type="term" value="F:RNA binding"/>
    <property type="evidence" value="ECO:0007669"/>
    <property type="project" value="InterPro"/>
</dbReference>
<dbReference type="GO" id="GO:0160147">
    <property type="term" value="F:tRNA pseudouridine(38-40) synthase activity"/>
    <property type="evidence" value="ECO:0007669"/>
    <property type="project" value="UniProtKB-EC"/>
</dbReference>
<dbReference type="GO" id="GO:0031119">
    <property type="term" value="P:tRNA pseudouridine synthesis"/>
    <property type="evidence" value="ECO:0007669"/>
    <property type="project" value="UniProtKB-UniRule"/>
</dbReference>
<dbReference type="CDD" id="cd02570">
    <property type="entry name" value="PseudoU_synth_EcTruA"/>
    <property type="match status" value="1"/>
</dbReference>
<dbReference type="FunFam" id="3.30.70.580:FF:000001">
    <property type="entry name" value="tRNA pseudouridine synthase A"/>
    <property type="match status" value="1"/>
</dbReference>
<dbReference type="Gene3D" id="3.30.70.660">
    <property type="entry name" value="Pseudouridine synthase I, catalytic domain, C-terminal subdomain"/>
    <property type="match status" value="1"/>
</dbReference>
<dbReference type="Gene3D" id="3.30.70.580">
    <property type="entry name" value="Pseudouridine synthase I, catalytic domain, N-terminal subdomain"/>
    <property type="match status" value="1"/>
</dbReference>
<dbReference type="HAMAP" id="MF_00171">
    <property type="entry name" value="TruA"/>
    <property type="match status" value="1"/>
</dbReference>
<dbReference type="InterPro" id="IPR020103">
    <property type="entry name" value="PsdUridine_synth_cat_dom_sf"/>
</dbReference>
<dbReference type="InterPro" id="IPR001406">
    <property type="entry name" value="PsdUridine_synth_TruA"/>
</dbReference>
<dbReference type="InterPro" id="IPR020097">
    <property type="entry name" value="PsdUridine_synth_TruA_a/b_dom"/>
</dbReference>
<dbReference type="InterPro" id="IPR020095">
    <property type="entry name" value="PsdUridine_synth_TruA_C"/>
</dbReference>
<dbReference type="InterPro" id="IPR020094">
    <property type="entry name" value="TruA/RsuA/RluB/E/F_N"/>
</dbReference>
<dbReference type="NCBIfam" id="TIGR00071">
    <property type="entry name" value="hisT_truA"/>
    <property type="match status" value="1"/>
</dbReference>
<dbReference type="PANTHER" id="PTHR11142">
    <property type="entry name" value="PSEUDOURIDYLATE SYNTHASE"/>
    <property type="match status" value="1"/>
</dbReference>
<dbReference type="PANTHER" id="PTHR11142:SF0">
    <property type="entry name" value="TRNA PSEUDOURIDINE SYNTHASE-LIKE 1"/>
    <property type="match status" value="1"/>
</dbReference>
<dbReference type="Pfam" id="PF01416">
    <property type="entry name" value="PseudoU_synth_1"/>
    <property type="match status" value="2"/>
</dbReference>
<dbReference type="PIRSF" id="PIRSF001430">
    <property type="entry name" value="tRNA_psdUrid_synth"/>
    <property type="match status" value="1"/>
</dbReference>
<dbReference type="SUPFAM" id="SSF55120">
    <property type="entry name" value="Pseudouridine synthase"/>
    <property type="match status" value="1"/>
</dbReference>
<accession>Q2RNZ9</accession>
<comment type="function">
    <text evidence="1">Formation of pseudouridine at positions 38, 39 and 40 in the anticodon stem and loop of transfer RNAs.</text>
</comment>
<comment type="catalytic activity">
    <reaction evidence="1">
        <text>uridine(38/39/40) in tRNA = pseudouridine(38/39/40) in tRNA</text>
        <dbReference type="Rhea" id="RHEA:22376"/>
        <dbReference type="Rhea" id="RHEA-COMP:10085"/>
        <dbReference type="Rhea" id="RHEA-COMP:10087"/>
        <dbReference type="ChEBI" id="CHEBI:65314"/>
        <dbReference type="ChEBI" id="CHEBI:65315"/>
        <dbReference type="EC" id="5.4.99.12"/>
    </reaction>
</comment>
<comment type="subunit">
    <text evidence="1">Homodimer.</text>
</comment>
<comment type="similarity">
    <text evidence="1">Belongs to the tRNA pseudouridine synthase TruA family.</text>
</comment>
<organism>
    <name type="scientific">Rhodospirillum rubrum (strain ATCC 11170 / ATH 1.1.1 / DSM 467 / LMG 4362 / NCIMB 8255 / S1)</name>
    <dbReference type="NCBI Taxonomy" id="269796"/>
    <lineage>
        <taxon>Bacteria</taxon>
        <taxon>Pseudomonadati</taxon>
        <taxon>Pseudomonadota</taxon>
        <taxon>Alphaproteobacteria</taxon>
        <taxon>Rhodospirillales</taxon>
        <taxon>Rhodospirillaceae</taxon>
        <taxon>Rhodospirillum</taxon>
    </lineage>
</organism>
<protein>
    <recommendedName>
        <fullName evidence="1">tRNA pseudouridine synthase A</fullName>
        <ecNumber evidence="1">5.4.99.12</ecNumber>
    </recommendedName>
    <alternativeName>
        <fullName evidence="1">tRNA pseudouridine(38-40) synthase</fullName>
    </alternativeName>
    <alternativeName>
        <fullName evidence="1">tRNA pseudouridylate synthase I</fullName>
    </alternativeName>
    <alternativeName>
        <fullName evidence="1">tRNA-uridine isomerase I</fullName>
    </alternativeName>
</protein>
<proteinExistence type="inferred from homology"/>
<sequence length="278" mass="30619">MVRYRLTVEYDGRGYCGWQRQDNGPTIQQSLEEAAFRLCGVATRVHGSGRTDSGVHALGQVAHLDLPRAYGAATVMKALNAHLRPQPIAVIDAAEVAEDFHARFSAEERSYRYRILNRIAPPTLDQGRVWWVARPMEAAIMDEAAQVLVGRHDFSSFRAAECQADSPVKTLSELRVTRVGDEIHVFARARSFLHHQVRNMVGTLALVGDGRWTADRLRAALEACDRSAAGPTAPPDGLYFLRVRFPGETAAPAKAGPLEAAPLGEAPLKEATLKEDWR</sequence>
<evidence type="ECO:0000255" key="1">
    <source>
        <dbReference type="HAMAP-Rule" id="MF_00171"/>
    </source>
</evidence>
<evidence type="ECO:0000256" key="2">
    <source>
        <dbReference type="SAM" id="MobiDB-lite"/>
    </source>
</evidence>
<keyword id="KW-0413">Isomerase</keyword>
<keyword id="KW-1185">Reference proteome</keyword>
<keyword id="KW-0819">tRNA processing</keyword>
<gene>
    <name evidence="1" type="primary">truA</name>
    <name type="ordered locus">Rru_A3352</name>
</gene>
<reference key="1">
    <citation type="journal article" date="2011" name="Stand. Genomic Sci.">
        <title>Complete genome sequence of Rhodospirillum rubrum type strain (S1).</title>
        <authorList>
            <person name="Munk A.C."/>
            <person name="Copeland A."/>
            <person name="Lucas S."/>
            <person name="Lapidus A."/>
            <person name="Del Rio T.G."/>
            <person name="Barry K."/>
            <person name="Detter J.C."/>
            <person name="Hammon N."/>
            <person name="Israni S."/>
            <person name="Pitluck S."/>
            <person name="Brettin T."/>
            <person name="Bruce D."/>
            <person name="Han C."/>
            <person name="Tapia R."/>
            <person name="Gilna P."/>
            <person name="Schmutz J."/>
            <person name="Larimer F."/>
            <person name="Land M."/>
            <person name="Kyrpides N.C."/>
            <person name="Mavromatis K."/>
            <person name="Richardson P."/>
            <person name="Rohde M."/>
            <person name="Goeker M."/>
            <person name="Klenk H.P."/>
            <person name="Zhang Y."/>
            <person name="Roberts G.P."/>
            <person name="Reslewic S."/>
            <person name="Schwartz D.C."/>
        </authorList>
    </citation>
    <scope>NUCLEOTIDE SEQUENCE [LARGE SCALE GENOMIC DNA]</scope>
    <source>
        <strain>ATCC 11170 / ATH 1.1.1 / DSM 467 / LMG 4362 / NCIMB 8255 / S1</strain>
    </source>
</reference>